<evidence type="ECO:0000255" key="1">
    <source>
        <dbReference type="HAMAP-Rule" id="MF_00146"/>
    </source>
</evidence>
<organism>
    <name type="scientific">Aquifex aeolicus (strain VF5)</name>
    <dbReference type="NCBI Taxonomy" id="224324"/>
    <lineage>
        <taxon>Bacteria</taxon>
        <taxon>Pseudomonadati</taxon>
        <taxon>Aquificota</taxon>
        <taxon>Aquificia</taxon>
        <taxon>Aquificales</taxon>
        <taxon>Aquificaceae</taxon>
        <taxon>Aquifex</taxon>
    </lineage>
</organism>
<accession>O67539</accession>
<feature type="chain" id="PRO_0000155963" description="dCTP deaminase, dUMP-forming">
    <location>
        <begin position="1"/>
        <end position="180"/>
    </location>
</feature>
<feature type="active site" description="Proton donor/acceptor" evidence="1">
    <location>
        <position position="123"/>
    </location>
</feature>
<feature type="binding site" evidence="1">
    <location>
        <begin position="96"/>
        <end position="101"/>
    </location>
    <ligand>
        <name>dCTP</name>
        <dbReference type="ChEBI" id="CHEBI:61481"/>
    </ligand>
</feature>
<feature type="binding site" evidence="1">
    <location>
        <position position="113"/>
    </location>
    <ligand>
        <name>dCTP</name>
        <dbReference type="ChEBI" id="CHEBI:61481"/>
    </ligand>
</feature>
<feature type="binding site" evidence="1">
    <location>
        <begin position="121"/>
        <end position="123"/>
    </location>
    <ligand>
        <name>dCTP</name>
        <dbReference type="ChEBI" id="CHEBI:61481"/>
    </ligand>
</feature>
<feature type="binding site" evidence="1">
    <location>
        <position position="142"/>
    </location>
    <ligand>
        <name>dCTP</name>
        <dbReference type="ChEBI" id="CHEBI:61481"/>
    </ligand>
</feature>
<feature type="binding site" evidence="1">
    <location>
        <position position="156"/>
    </location>
    <ligand>
        <name>dCTP</name>
        <dbReference type="ChEBI" id="CHEBI:61481"/>
    </ligand>
</feature>
<feature type="binding site" evidence="1">
    <location>
        <position position="163"/>
    </location>
    <ligand>
        <name>dCTP</name>
        <dbReference type="ChEBI" id="CHEBI:61481"/>
    </ligand>
</feature>
<feature type="site" description="Important for bifunctional activity" evidence="1">
    <location>
        <begin position="110"/>
        <end position="111"/>
    </location>
</feature>
<gene>
    <name evidence="1" type="primary">dcd</name>
    <name type="ordered locus">aq_1607</name>
</gene>
<proteinExistence type="inferred from homology"/>
<dbReference type="EC" id="3.5.4.30" evidence="1"/>
<dbReference type="EMBL" id="AE000657">
    <property type="protein sequence ID" value="AAC07499.1"/>
    <property type="molecule type" value="Genomic_DNA"/>
</dbReference>
<dbReference type="PIR" id="A70439">
    <property type="entry name" value="A70439"/>
</dbReference>
<dbReference type="RefSeq" id="NP_214104.1">
    <property type="nucleotide sequence ID" value="NC_000918.1"/>
</dbReference>
<dbReference type="RefSeq" id="WP_010881042.1">
    <property type="nucleotide sequence ID" value="NC_000918.1"/>
</dbReference>
<dbReference type="SMR" id="O67539"/>
<dbReference type="FunCoup" id="O67539">
    <property type="interactions" value="185"/>
</dbReference>
<dbReference type="STRING" id="224324.aq_1607"/>
<dbReference type="EnsemblBacteria" id="AAC07499">
    <property type="protein sequence ID" value="AAC07499"/>
    <property type="gene ID" value="aq_1607"/>
</dbReference>
<dbReference type="KEGG" id="aae:aq_1607"/>
<dbReference type="PATRIC" id="fig|224324.8.peg.1241"/>
<dbReference type="eggNOG" id="COG0717">
    <property type="taxonomic scope" value="Bacteria"/>
</dbReference>
<dbReference type="HOGENOM" id="CLU_087476_2_1_0"/>
<dbReference type="InParanoid" id="O67539"/>
<dbReference type="OrthoDB" id="9780202at2"/>
<dbReference type="UniPathway" id="UPA00610">
    <property type="reaction ID" value="UER00667"/>
</dbReference>
<dbReference type="Proteomes" id="UP000000798">
    <property type="component" value="Chromosome"/>
</dbReference>
<dbReference type="GO" id="GO:0033973">
    <property type="term" value="F:dCTP deaminase (dUMP-forming) activity"/>
    <property type="evidence" value="ECO:0007669"/>
    <property type="project" value="UniProtKB-UniRule"/>
</dbReference>
<dbReference type="GO" id="GO:0008829">
    <property type="term" value="F:dCTP deaminase activity"/>
    <property type="evidence" value="ECO:0000318"/>
    <property type="project" value="GO_Central"/>
</dbReference>
<dbReference type="GO" id="GO:0000166">
    <property type="term" value="F:nucleotide binding"/>
    <property type="evidence" value="ECO:0007669"/>
    <property type="project" value="UniProtKB-KW"/>
</dbReference>
<dbReference type="GO" id="GO:0006226">
    <property type="term" value="P:dUMP biosynthetic process"/>
    <property type="evidence" value="ECO:0007669"/>
    <property type="project" value="UniProtKB-UniRule"/>
</dbReference>
<dbReference type="GO" id="GO:0006229">
    <property type="term" value="P:dUTP biosynthetic process"/>
    <property type="evidence" value="ECO:0007669"/>
    <property type="project" value="InterPro"/>
</dbReference>
<dbReference type="GO" id="GO:0015949">
    <property type="term" value="P:nucleobase-containing small molecule interconversion"/>
    <property type="evidence" value="ECO:0000318"/>
    <property type="project" value="GO_Central"/>
</dbReference>
<dbReference type="CDD" id="cd07557">
    <property type="entry name" value="trimeric_dUTPase"/>
    <property type="match status" value="1"/>
</dbReference>
<dbReference type="FunFam" id="2.70.40.10:FF:000005">
    <property type="entry name" value="dCTP deaminase, dUMP-forming"/>
    <property type="match status" value="1"/>
</dbReference>
<dbReference type="Gene3D" id="2.70.40.10">
    <property type="match status" value="1"/>
</dbReference>
<dbReference type="HAMAP" id="MF_00146">
    <property type="entry name" value="dCTP_deaminase"/>
    <property type="match status" value="1"/>
</dbReference>
<dbReference type="InterPro" id="IPR011962">
    <property type="entry name" value="dCTP_deaminase"/>
</dbReference>
<dbReference type="InterPro" id="IPR036157">
    <property type="entry name" value="dUTPase-like_sf"/>
</dbReference>
<dbReference type="InterPro" id="IPR033704">
    <property type="entry name" value="dUTPase_trimeric"/>
</dbReference>
<dbReference type="NCBIfam" id="TIGR02274">
    <property type="entry name" value="dCTP_deam"/>
    <property type="match status" value="1"/>
</dbReference>
<dbReference type="PANTHER" id="PTHR42680">
    <property type="entry name" value="DCTP DEAMINASE"/>
    <property type="match status" value="1"/>
</dbReference>
<dbReference type="PANTHER" id="PTHR42680:SF3">
    <property type="entry name" value="DCTP DEAMINASE"/>
    <property type="match status" value="1"/>
</dbReference>
<dbReference type="Pfam" id="PF22769">
    <property type="entry name" value="DCD"/>
    <property type="match status" value="1"/>
</dbReference>
<dbReference type="SUPFAM" id="SSF51283">
    <property type="entry name" value="dUTPase-like"/>
    <property type="match status" value="1"/>
</dbReference>
<keyword id="KW-0378">Hydrolase</keyword>
<keyword id="KW-0546">Nucleotide metabolism</keyword>
<keyword id="KW-0547">Nucleotide-binding</keyword>
<keyword id="KW-1185">Reference proteome</keyword>
<sequence>MILSDRSIRELIEKGELKVEPYEPSHVQCSSLDLRLGNQIALYEGEGVIDVKKGTKGVRILEFEEYFDIMPKQFLLATTLEYISLPPYVTAFVEGRSSLGRLGLFIENAGWVDAGFEGQITLELFNANDRPIRLYRGMRICQLVFARLDRPPERVYSGKYKGQKGVVPSRIHMDEELKSE</sequence>
<name>DCDB_AQUAE</name>
<comment type="function">
    <text evidence="1">Bifunctional enzyme that catalyzes both the deamination of dCTP to dUTP and the hydrolysis of dUTP to dUMP without releasing the toxic dUTP intermediate.</text>
</comment>
<comment type="catalytic activity">
    <reaction evidence="1">
        <text>dCTP + 2 H2O = dUMP + NH4(+) + diphosphate</text>
        <dbReference type="Rhea" id="RHEA:19205"/>
        <dbReference type="ChEBI" id="CHEBI:15377"/>
        <dbReference type="ChEBI" id="CHEBI:28938"/>
        <dbReference type="ChEBI" id="CHEBI:33019"/>
        <dbReference type="ChEBI" id="CHEBI:61481"/>
        <dbReference type="ChEBI" id="CHEBI:246422"/>
        <dbReference type="EC" id="3.5.4.30"/>
    </reaction>
</comment>
<comment type="pathway">
    <text evidence="1">Pyrimidine metabolism; dUMP biosynthesis; dUMP from dCTP: step 1/1.</text>
</comment>
<comment type="subunit">
    <text evidence="1">Homotrimer.</text>
</comment>
<comment type="similarity">
    <text evidence="1">Belongs to the dCTP deaminase family.</text>
</comment>
<protein>
    <recommendedName>
        <fullName evidence="1">dCTP deaminase, dUMP-forming</fullName>
        <ecNumber evidence="1">3.5.4.30</ecNumber>
    </recommendedName>
    <alternativeName>
        <fullName evidence="1">Bifunctional dCTP deaminase:dUTPase</fullName>
    </alternativeName>
    <alternativeName>
        <fullName evidence="1">DCD-DUT</fullName>
    </alternativeName>
</protein>
<reference key="1">
    <citation type="journal article" date="1998" name="Nature">
        <title>The complete genome of the hyperthermophilic bacterium Aquifex aeolicus.</title>
        <authorList>
            <person name="Deckert G."/>
            <person name="Warren P.V."/>
            <person name="Gaasterland T."/>
            <person name="Young W.G."/>
            <person name="Lenox A.L."/>
            <person name="Graham D.E."/>
            <person name="Overbeek R."/>
            <person name="Snead M.A."/>
            <person name="Keller M."/>
            <person name="Aujay M."/>
            <person name="Huber R."/>
            <person name="Feldman R.A."/>
            <person name="Short J.M."/>
            <person name="Olsen G.J."/>
            <person name="Swanson R.V."/>
        </authorList>
    </citation>
    <scope>NUCLEOTIDE SEQUENCE [LARGE SCALE GENOMIC DNA]</scope>
    <source>
        <strain>VF5</strain>
    </source>
</reference>